<sequence>MFDLRTKVMIGIASTLLIAAIVLITVVFCLYLKISKALKCAREVESCMDPTKAVSEKMIRGKPIIADPCRPLQCCDNCSLFKDVGAMPPCFCGTNEGL</sequence>
<feature type="signal peptide" evidence="1">
    <location>
        <begin position="1"/>
        <end position="29"/>
    </location>
</feature>
<feature type="chain" id="PRO_0000353117" description="Protein FAM24A">
    <location>
        <begin position="30"/>
        <end position="98"/>
    </location>
</feature>
<gene>
    <name type="primary">Fam24a</name>
</gene>
<evidence type="ECO:0000255" key="1"/>
<evidence type="ECO:0000305" key="2"/>
<name>FA24A_RAT</name>
<accession>B1WBS9</accession>
<keyword id="KW-1185">Reference proteome</keyword>
<keyword id="KW-0964">Secreted</keyword>
<keyword id="KW-0732">Signal</keyword>
<comment type="subcellular location">
    <subcellularLocation>
        <location>Secreted</location>
    </subcellularLocation>
</comment>
<comment type="similarity">
    <text evidence="2">Belongs to the FAM24 family.</text>
</comment>
<dbReference type="EMBL" id="CH473953">
    <property type="protein sequence ID" value="EDM11688.1"/>
    <property type="molecule type" value="Genomic_DNA"/>
</dbReference>
<dbReference type="EMBL" id="BC161873">
    <property type="protein sequence ID" value="AAI61873.1"/>
    <property type="molecule type" value="mRNA"/>
</dbReference>
<dbReference type="EMBL" id="BC166439">
    <property type="protein sequence ID" value="AAI66439.1"/>
    <property type="molecule type" value="mRNA"/>
</dbReference>
<dbReference type="RefSeq" id="NP_001102628.1">
    <property type="nucleotide sequence ID" value="NM_001109158.1"/>
</dbReference>
<dbReference type="SMR" id="B1WBS9"/>
<dbReference type="FunCoup" id="B1WBS9">
    <property type="interactions" value="1"/>
</dbReference>
<dbReference type="STRING" id="10116.ENSRNOP00000030294"/>
<dbReference type="PhosphoSitePlus" id="B1WBS9"/>
<dbReference type="PaxDb" id="10116-ENSRNOP00000030294"/>
<dbReference type="GeneID" id="499278"/>
<dbReference type="KEGG" id="rno:499278"/>
<dbReference type="UCSC" id="RGD:1560948">
    <property type="organism name" value="rat"/>
</dbReference>
<dbReference type="AGR" id="RGD:1560948"/>
<dbReference type="CTD" id="118670"/>
<dbReference type="RGD" id="1560948">
    <property type="gene designation" value="Fam24a"/>
</dbReference>
<dbReference type="eggNOG" id="ENOG502TEP5">
    <property type="taxonomic scope" value="Eukaryota"/>
</dbReference>
<dbReference type="HOGENOM" id="CLU_160106_0_0_1"/>
<dbReference type="InParanoid" id="B1WBS9"/>
<dbReference type="OrthoDB" id="9784605at2759"/>
<dbReference type="PhylomeDB" id="B1WBS9"/>
<dbReference type="TreeFam" id="TF338384"/>
<dbReference type="PRO" id="PR:B1WBS9"/>
<dbReference type="Proteomes" id="UP000002494">
    <property type="component" value="Chromosome 1"/>
</dbReference>
<dbReference type="Proteomes" id="UP000234681">
    <property type="component" value="Chromosome 1"/>
</dbReference>
<dbReference type="Bgee" id="ENSRNOG00000026035">
    <property type="expression patterns" value="Expressed in testis and 5 other cell types or tissues"/>
</dbReference>
<dbReference type="GO" id="GO:0005576">
    <property type="term" value="C:extracellular region"/>
    <property type="evidence" value="ECO:0007669"/>
    <property type="project" value="UniProtKB-SubCell"/>
</dbReference>
<dbReference type="InterPro" id="IPR028122">
    <property type="entry name" value="FAM24"/>
</dbReference>
<dbReference type="PANTHER" id="PTHR35860:SF1">
    <property type="entry name" value="PROTEIN FAM24A"/>
    <property type="match status" value="1"/>
</dbReference>
<dbReference type="PANTHER" id="PTHR35860">
    <property type="entry name" value="PROTEIN FAM24B"/>
    <property type="match status" value="1"/>
</dbReference>
<dbReference type="Pfam" id="PF15193">
    <property type="entry name" value="FAM24"/>
    <property type="match status" value="1"/>
</dbReference>
<organism>
    <name type="scientific">Rattus norvegicus</name>
    <name type="common">Rat</name>
    <dbReference type="NCBI Taxonomy" id="10116"/>
    <lineage>
        <taxon>Eukaryota</taxon>
        <taxon>Metazoa</taxon>
        <taxon>Chordata</taxon>
        <taxon>Craniata</taxon>
        <taxon>Vertebrata</taxon>
        <taxon>Euteleostomi</taxon>
        <taxon>Mammalia</taxon>
        <taxon>Eutheria</taxon>
        <taxon>Euarchontoglires</taxon>
        <taxon>Glires</taxon>
        <taxon>Rodentia</taxon>
        <taxon>Myomorpha</taxon>
        <taxon>Muroidea</taxon>
        <taxon>Muridae</taxon>
        <taxon>Murinae</taxon>
        <taxon>Rattus</taxon>
    </lineage>
</organism>
<proteinExistence type="inferred from homology"/>
<reference key="1">
    <citation type="submission" date="2005-07" db="EMBL/GenBank/DDBJ databases">
        <authorList>
            <person name="Mural R.J."/>
            <person name="Adams M.D."/>
            <person name="Myers E.W."/>
            <person name="Smith H.O."/>
            <person name="Venter J.C."/>
        </authorList>
    </citation>
    <scope>NUCLEOTIDE SEQUENCE [LARGE SCALE GENOMIC DNA]</scope>
    <source>
        <strain>Brown Norway</strain>
    </source>
</reference>
<reference key="2">
    <citation type="journal article" date="2004" name="Genome Res.">
        <title>The status, quality, and expansion of the NIH full-length cDNA project: the Mammalian Gene Collection (MGC).</title>
        <authorList>
            <consortium name="The MGC Project Team"/>
        </authorList>
    </citation>
    <scope>NUCLEOTIDE SEQUENCE [LARGE SCALE MRNA]</scope>
    <source>
        <tissue>Testis</tissue>
    </source>
</reference>
<protein>
    <recommendedName>
        <fullName>Protein FAM24A</fullName>
    </recommendedName>
</protein>